<organism>
    <name type="scientific">Streptococcus pneumoniae serotype 19F (strain G54)</name>
    <dbReference type="NCBI Taxonomy" id="512566"/>
    <lineage>
        <taxon>Bacteria</taxon>
        <taxon>Bacillati</taxon>
        <taxon>Bacillota</taxon>
        <taxon>Bacilli</taxon>
        <taxon>Lactobacillales</taxon>
        <taxon>Streptococcaceae</taxon>
        <taxon>Streptococcus</taxon>
    </lineage>
</organism>
<dbReference type="EMBL" id="CP001015">
    <property type="protein sequence ID" value="ACF55210.1"/>
    <property type="molecule type" value="Genomic_DNA"/>
</dbReference>
<dbReference type="SMR" id="B5E6E0"/>
<dbReference type="KEGG" id="spx:SPG_0180"/>
<dbReference type="HOGENOM" id="CLU_162466_0_0_9"/>
<dbReference type="HAMAP" id="MF_01507">
    <property type="entry name" value="UPF0297"/>
    <property type="match status" value="1"/>
</dbReference>
<dbReference type="InterPro" id="IPR009309">
    <property type="entry name" value="IreB"/>
</dbReference>
<dbReference type="NCBIfam" id="NF003997">
    <property type="entry name" value="PRK05473.1"/>
    <property type="match status" value="1"/>
</dbReference>
<dbReference type="PANTHER" id="PTHR40067">
    <property type="entry name" value="UPF0297 PROTEIN YRZL"/>
    <property type="match status" value="1"/>
</dbReference>
<dbReference type="PANTHER" id="PTHR40067:SF1">
    <property type="entry name" value="UPF0297 PROTEIN YRZL"/>
    <property type="match status" value="1"/>
</dbReference>
<dbReference type="Pfam" id="PF06135">
    <property type="entry name" value="IreB"/>
    <property type="match status" value="1"/>
</dbReference>
<dbReference type="PIRSF" id="PIRSF037258">
    <property type="entry name" value="DUF965_bac"/>
    <property type="match status" value="1"/>
</dbReference>
<gene>
    <name type="ordered locus">SPG_0180</name>
</gene>
<proteinExistence type="inferred from homology"/>
<reference key="1">
    <citation type="journal article" date="2001" name="Microb. Drug Resist.">
        <title>Annotated draft genomic sequence from a Streptococcus pneumoniae type 19F clinical isolate.</title>
        <authorList>
            <person name="Dopazo J."/>
            <person name="Mendoza A."/>
            <person name="Herrero J."/>
            <person name="Caldara F."/>
            <person name="Humbert Y."/>
            <person name="Friedli L."/>
            <person name="Guerrier M."/>
            <person name="Grand-Schenk E."/>
            <person name="Gandin C."/>
            <person name="de Francesco M."/>
            <person name="Polissi A."/>
            <person name="Buell G."/>
            <person name="Feger G."/>
            <person name="Garcia E."/>
            <person name="Peitsch M."/>
            <person name="Garcia-Bustos J.F."/>
        </authorList>
    </citation>
    <scope>NUCLEOTIDE SEQUENCE [LARGE SCALE GENOMIC DNA]</scope>
    <source>
        <strain>G54</strain>
    </source>
</reference>
<reference key="2">
    <citation type="submission" date="2008-03" db="EMBL/GenBank/DDBJ databases">
        <title>Pneumococcal beta glucoside metabolism investigated by whole genome comparison.</title>
        <authorList>
            <person name="Mulas L."/>
            <person name="Trappetti C."/>
            <person name="Hakenbeck R."/>
            <person name="Iannelli F."/>
            <person name="Pozzi G."/>
            <person name="Davidsen T.M."/>
            <person name="Tettelin H."/>
            <person name="Oggioni M."/>
        </authorList>
    </citation>
    <scope>NUCLEOTIDE SEQUENCE [LARGE SCALE GENOMIC DNA]</scope>
    <source>
        <strain>G54</strain>
    </source>
</reference>
<evidence type="ECO:0000255" key="1">
    <source>
        <dbReference type="HAMAP-Rule" id="MF_01507"/>
    </source>
</evidence>
<name>Y180_STRP4</name>
<comment type="similarity">
    <text evidence="1">Belongs to the UPF0297 family.</text>
</comment>
<protein>
    <recommendedName>
        <fullName evidence="1">UPF0297 protein SPG_0180</fullName>
    </recommendedName>
</protein>
<feature type="chain" id="PRO_1000198242" description="UPF0297 protein SPG_0180">
    <location>
        <begin position="1"/>
        <end position="88"/>
    </location>
</feature>
<accession>B5E6E0</accession>
<sequence length="88" mass="10227">MGFTEETVRFKLDDSNKKEISETLTDVYASLNDKGYNPINQIVGYVLSGDPAYVPRYNNARNQIRKYERDEIVEELVRYYLKGQGVDL</sequence>